<accession>Q2MII3</accession>
<comment type="function">
    <text evidence="1">NDH shuttles electrons from NAD(P)H:plastoquinone, via FMN and iron-sulfur (Fe-S) centers, to quinones in the photosynthetic chain and possibly in a chloroplast respiratory chain. The immediate electron acceptor for the enzyme in this species is believed to be plastoquinone. Couples the redox reaction to proton translocation, and thus conserves the redox energy in a proton gradient.</text>
</comment>
<comment type="catalytic activity">
    <reaction evidence="1">
        <text>a plastoquinone + NADH + (n+1) H(+)(in) = a plastoquinol + NAD(+) + n H(+)(out)</text>
        <dbReference type="Rhea" id="RHEA:42608"/>
        <dbReference type="Rhea" id="RHEA-COMP:9561"/>
        <dbReference type="Rhea" id="RHEA-COMP:9562"/>
        <dbReference type="ChEBI" id="CHEBI:15378"/>
        <dbReference type="ChEBI" id="CHEBI:17757"/>
        <dbReference type="ChEBI" id="CHEBI:57540"/>
        <dbReference type="ChEBI" id="CHEBI:57945"/>
        <dbReference type="ChEBI" id="CHEBI:62192"/>
    </reaction>
</comment>
<comment type="catalytic activity">
    <reaction evidence="1">
        <text>a plastoquinone + NADPH + (n+1) H(+)(in) = a plastoquinol + NADP(+) + n H(+)(out)</text>
        <dbReference type="Rhea" id="RHEA:42612"/>
        <dbReference type="Rhea" id="RHEA-COMP:9561"/>
        <dbReference type="Rhea" id="RHEA-COMP:9562"/>
        <dbReference type="ChEBI" id="CHEBI:15378"/>
        <dbReference type="ChEBI" id="CHEBI:17757"/>
        <dbReference type="ChEBI" id="CHEBI:57783"/>
        <dbReference type="ChEBI" id="CHEBI:58349"/>
        <dbReference type="ChEBI" id="CHEBI:62192"/>
    </reaction>
</comment>
<comment type="cofactor">
    <cofactor evidence="1">
        <name>[4Fe-4S] cluster</name>
        <dbReference type="ChEBI" id="CHEBI:49883"/>
    </cofactor>
    <text evidence="1">Binds 1 [4Fe-4S] cluster.</text>
</comment>
<comment type="subunit">
    <text evidence="1">NDH is composed of at least 16 different subunits, 5 of which are encoded in the nucleus.</text>
</comment>
<comment type="subcellular location">
    <subcellularLocation>
        <location evidence="1">Plastid</location>
        <location evidence="1">Chloroplast thylakoid membrane</location>
        <topology evidence="1">Peripheral membrane protein</topology>
        <orientation evidence="1">Stromal side</orientation>
    </subcellularLocation>
</comment>
<comment type="similarity">
    <text evidence="1">Belongs to the complex I 20 kDa subunit family.</text>
</comment>
<comment type="sequence caution" evidence="2">
    <conflict type="erroneous initiation">
        <sequence resource="EMBL-CDS" id="ABC56217"/>
    </conflict>
</comment>
<name>NDHK_SOLBU</name>
<evidence type="ECO:0000255" key="1">
    <source>
        <dbReference type="HAMAP-Rule" id="MF_01356"/>
    </source>
</evidence>
<evidence type="ECO:0000305" key="2"/>
<geneLocation type="chloroplast"/>
<protein>
    <recommendedName>
        <fullName evidence="1">NAD(P)H-quinone oxidoreductase subunit K, chloroplastic</fullName>
        <ecNumber evidence="1">7.1.1.-</ecNumber>
    </recommendedName>
    <alternativeName>
        <fullName evidence="1">NAD(P)H dehydrogenase subunit K</fullName>
    </alternativeName>
    <alternativeName>
        <fullName evidence="1">NADH-plastoquinone oxidoreductase subunit K</fullName>
    </alternativeName>
</protein>
<sequence>MNSIQFPLLDRTAPNSVISTTLNDLSNWSRLSSLWPLLYGTSCCFIEFASLIGSRFDFDRYGLVPRSSPRQSDLILTAGTVTMKMAPSLVRLYEQMPEPKYVIAMGACTITGGMFSTDSYSTVRGVDKLIPVDVYLPGCPPKPEAVIDAITKLRKKISRELYEDRIRSQRANRCFTTNHKFHVRRSIHTGNYDQRVLYQPPSTSEIPTEIFFKYKNSVSSAELVN</sequence>
<gene>
    <name evidence="1" type="primary">ndhK</name>
</gene>
<dbReference type="EC" id="7.1.1.-" evidence="1"/>
<dbReference type="EMBL" id="DQ347958">
    <property type="protein sequence ID" value="ABC56217.1"/>
    <property type="status" value="ALT_INIT"/>
    <property type="molecule type" value="Genomic_DNA"/>
</dbReference>
<dbReference type="RefSeq" id="YP_538852.1">
    <property type="nucleotide sequence ID" value="NC_007943.1"/>
</dbReference>
<dbReference type="SMR" id="Q2MII3"/>
<dbReference type="GeneID" id="3989509"/>
<dbReference type="GO" id="GO:0009535">
    <property type="term" value="C:chloroplast thylakoid membrane"/>
    <property type="evidence" value="ECO:0007669"/>
    <property type="project" value="UniProtKB-SubCell"/>
</dbReference>
<dbReference type="GO" id="GO:0045271">
    <property type="term" value="C:respiratory chain complex I"/>
    <property type="evidence" value="ECO:0007669"/>
    <property type="project" value="TreeGrafter"/>
</dbReference>
<dbReference type="GO" id="GO:0051539">
    <property type="term" value="F:4 iron, 4 sulfur cluster binding"/>
    <property type="evidence" value="ECO:0007669"/>
    <property type="project" value="UniProtKB-KW"/>
</dbReference>
<dbReference type="GO" id="GO:0005506">
    <property type="term" value="F:iron ion binding"/>
    <property type="evidence" value="ECO:0007669"/>
    <property type="project" value="UniProtKB-UniRule"/>
</dbReference>
<dbReference type="GO" id="GO:0008137">
    <property type="term" value="F:NADH dehydrogenase (ubiquinone) activity"/>
    <property type="evidence" value="ECO:0007669"/>
    <property type="project" value="InterPro"/>
</dbReference>
<dbReference type="GO" id="GO:0048038">
    <property type="term" value="F:quinone binding"/>
    <property type="evidence" value="ECO:0007669"/>
    <property type="project" value="UniProtKB-KW"/>
</dbReference>
<dbReference type="GO" id="GO:0009060">
    <property type="term" value="P:aerobic respiration"/>
    <property type="evidence" value="ECO:0007669"/>
    <property type="project" value="TreeGrafter"/>
</dbReference>
<dbReference type="GO" id="GO:0015990">
    <property type="term" value="P:electron transport coupled proton transport"/>
    <property type="evidence" value="ECO:0007669"/>
    <property type="project" value="TreeGrafter"/>
</dbReference>
<dbReference type="GO" id="GO:0019684">
    <property type="term" value="P:photosynthesis, light reaction"/>
    <property type="evidence" value="ECO:0007669"/>
    <property type="project" value="UniProtKB-UniRule"/>
</dbReference>
<dbReference type="FunFam" id="3.40.50.12280:FF:000003">
    <property type="entry name" value="NAD(P)H-quinone oxidoreductase subunit K, chloroplastic"/>
    <property type="match status" value="1"/>
</dbReference>
<dbReference type="Gene3D" id="3.40.50.12280">
    <property type="match status" value="1"/>
</dbReference>
<dbReference type="HAMAP" id="MF_01356">
    <property type="entry name" value="NDH1_NuoB"/>
    <property type="match status" value="1"/>
</dbReference>
<dbReference type="InterPro" id="IPR006137">
    <property type="entry name" value="NADH_UbQ_OxRdtase-like_20kDa"/>
</dbReference>
<dbReference type="InterPro" id="IPR006138">
    <property type="entry name" value="NADH_UQ_OxRdtase_20Kd_su"/>
</dbReference>
<dbReference type="NCBIfam" id="TIGR01957">
    <property type="entry name" value="nuoB_fam"/>
    <property type="match status" value="1"/>
</dbReference>
<dbReference type="NCBIfam" id="NF005012">
    <property type="entry name" value="PRK06411.1"/>
    <property type="match status" value="1"/>
</dbReference>
<dbReference type="PANTHER" id="PTHR11995">
    <property type="entry name" value="NADH DEHYDROGENASE"/>
    <property type="match status" value="1"/>
</dbReference>
<dbReference type="PANTHER" id="PTHR11995:SF14">
    <property type="entry name" value="NADH DEHYDROGENASE [UBIQUINONE] IRON-SULFUR PROTEIN 7, MITOCHONDRIAL"/>
    <property type="match status" value="1"/>
</dbReference>
<dbReference type="Pfam" id="PF01058">
    <property type="entry name" value="Oxidored_q6"/>
    <property type="match status" value="1"/>
</dbReference>
<dbReference type="SUPFAM" id="SSF56770">
    <property type="entry name" value="HydA/Nqo6-like"/>
    <property type="match status" value="1"/>
</dbReference>
<dbReference type="PROSITE" id="PS01150">
    <property type="entry name" value="COMPLEX1_20K"/>
    <property type="match status" value="1"/>
</dbReference>
<reference key="1">
    <citation type="journal article" date="2006" name="Theor. Appl. Genet.">
        <title>Complete chloroplast genome sequences of Solanum bulbocastanum, Solanum lycopersicum and comparative analyses with other Solanaceae genomes.</title>
        <authorList>
            <person name="Daniell H."/>
            <person name="Lee S.-B."/>
            <person name="Grevich J."/>
            <person name="Saski C."/>
            <person name="Quesada-Vargas T."/>
            <person name="Guda C."/>
            <person name="Tomkins J."/>
            <person name="Jansen R.K."/>
        </authorList>
    </citation>
    <scope>NUCLEOTIDE SEQUENCE [LARGE SCALE GENOMIC DNA]</scope>
    <source>
        <strain>cv. PT29</strain>
    </source>
</reference>
<keyword id="KW-0004">4Fe-4S</keyword>
<keyword id="KW-0150">Chloroplast</keyword>
<keyword id="KW-0408">Iron</keyword>
<keyword id="KW-0411">Iron-sulfur</keyword>
<keyword id="KW-0472">Membrane</keyword>
<keyword id="KW-0479">Metal-binding</keyword>
<keyword id="KW-0520">NAD</keyword>
<keyword id="KW-0521">NADP</keyword>
<keyword id="KW-0934">Plastid</keyword>
<keyword id="KW-0618">Plastoquinone</keyword>
<keyword id="KW-0874">Quinone</keyword>
<keyword id="KW-0793">Thylakoid</keyword>
<keyword id="KW-1278">Translocase</keyword>
<keyword id="KW-0813">Transport</keyword>
<feature type="chain" id="PRO_0000358582" description="NAD(P)H-quinone oxidoreductase subunit K, chloroplastic">
    <location>
        <begin position="1"/>
        <end position="225"/>
    </location>
</feature>
<feature type="binding site" evidence="1">
    <location>
        <position position="43"/>
    </location>
    <ligand>
        <name>[4Fe-4S] cluster</name>
        <dbReference type="ChEBI" id="CHEBI:49883"/>
    </ligand>
</feature>
<feature type="binding site" evidence="1">
    <location>
        <position position="44"/>
    </location>
    <ligand>
        <name>[4Fe-4S] cluster</name>
        <dbReference type="ChEBI" id="CHEBI:49883"/>
    </ligand>
</feature>
<feature type="binding site" evidence="1">
    <location>
        <position position="108"/>
    </location>
    <ligand>
        <name>[4Fe-4S] cluster</name>
        <dbReference type="ChEBI" id="CHEBI:49883"/>
    </ligand>
</feature>
<feature type="binding site" evidence="1">
    <location>
        <position position="139"/>
    </location>
    <ligand>
        <name>[4Fe-4S] cluster</name>
        <dbReference type="ChEBI" id="CHEBI:49883"/>
    </ligand>
</feature>
<proteinExistence type="inferred from homology"/>
<organism>
    <name type="scientific">Solanum bulbocastanum</name>
    <name type="common">Wild potato</name>
    <dbReference type="NCBI Taxonomy" id="147425"/>
    <lineage>
        <taxon>Eukaryota</taxon>
        <taxon>Viridiplantae</taxon>
        <taxon>Streptophyta</taxon>
        <taxon>Embryophyta</taxon>
        <taxon>Tracheophyta</taxon>
        <taxon>Spermatophyta</taxon>
        <taxon>Magnoliopsida</taxon>
        <taxon>eudicotyledons</taxon>
        <taxon>Gunneridae</taxon>
        <taxon>Pentapetalae</taxon>
        <taxon>asterids</taxon>
        <taxon>lamiids</taxon>
        <taxon>Solanales</taxon>
        <taxon>Solanaceae</taxon>
        <taxon>Solanoideae</taxon>
        <taxon>Solaneae</taxon>
        <taxon>Solanum</taxon>
    </lineage>
</organism>